<gene>
    <name evidence="1" type="primary">ccmA</name>
    <name type="ordered locus">Pden_1413</name>
</gene>
<accession>P52218</accession>
<accession>A1B1X0</accession>
<evidence type="ECO:0000255" key="1">
    <source>
        <dbReference type="HAMAP-Rule" id="MF_01707"/>
    </source>
</evidence>
<evidence type="ECO:0000269" key="2">
    <source>
    </source>
</evidence>
<evidence type="ECO:0000305" key="3"/>
<protein>
    <recommendedName>
        <fullName evidence="1">Cytochrome c biogenesis ATP-binding export protein CcmA</fullName>
        <ecNumber evidence="1">7.6.2.5</ecNumber>
    </recommendedName>
    <alternativeName>
        <fullName evidence="1">Heme exporter protein A</fullName>
    </alternativeName>
</protein>
<comment type="function">
    <text evidence="1">Part of the ABC transporter complex CcmAB involved in the biogenesis of c-type cytochromes; once thought to export heme, this seems not to be the case, but its exact role is uncertain. Responsible for energy coupling to the transport system.</text>
</comment>
<comment type="catalytic activity">
    <reaction evidence="1">
        <text>heme b(in) + ATP + H2O = heme b(out) + ADP + phosphate + H(+)</text>
        <dbReference type="Rhea" id="RHEA:19261"/>
        <dbReference type="ChEBI" id="CHEBI:15377"/>
        <dbReference type="ChEBI" id="CHEBI:15378"/>
        <dbReference type="ChEBI" id="CHEBI:30616"/>
        <dbReference type="ChEBI" id="CHEBI:43474"/>
        <dbReference type="ChEBI" id="CHEBI:60344"/>
        <dbReference type="ChEBI" id="CHEBI:456216"/>
        <dbReference type="EC" id="7.6.2.5"/>
    </reaction>
</comment>
<comment type="subunit">
    <text evidence="1 2">The complex is composed of two ATP-binding proteins (CcmA) and two transmembrane proteins (CcmB).</text>
</comment>
<comment type="subcellular location">
    <subcellularLocation>
        <location evidence="1">Cell inner membrane</location>
        <topology evidence="1">Peripheral membrane protein</topology>
    </subcellularLocation>
</comment>
<comment type="similarity">
    <text evidence="1">Belongs to the ABC transporter superfamily. CcmA exporter (TC 3.A.1.107) family.</text>
</comment>
<dbReference type="EC" id="7.6.2.5" evidence="1"/>
<dbReference type="EMBL" id="Z71971">
    <property type="protein sequence ID" value="CAA96502.1"/>
    <property type="molecule type" value="Genomic_DNA"/>
</dbReference>
<dbReference type="EMBL" id="CP000489">
    <property type="protein sequence ID" value="ABL69514.1"/>
    <property type="molecule type" value="Genomic_DNA"/>
</dbReference>
<dbReference type="RefSeq" id="WP_011747732.1">
    <property type="nucleotide sequence ID" value="NC_008686.1"/>
</dbReference>
<dbReference type="SMR" id="P52218"/>
<dbReference type="STRING" id="318586.Pden_1413"/>
<dbReference type="EnsemblBacteria" id="ABL69514">
    <property type="protein sequence ID" value="ABL69514"/>
    <property type="gene ID" value="Pden_1413"/>
</dbReference>
<dbReference type="GeneID" id="93449879"/>
<dbReference type="KEGG" id="pde:Pden_1413"/>
<dbReference type="eggNOG" id="COG4133">
    <property type="taxonomic scope" value="Bacteria"/>
</dbReference>
<dbReference type="HOGENOM" id="CLU_000604_1_2_5"/>
<dbReference type="OrthoDB" id="9800654at2"/>
<dbReference type="Proteomes" id="UP000000361">
    <property type="component" value="Chromosome 1"/>
</dbReference>
<dbReference type="GO" id="GO:0005886">
    <property type="term" value="C:plasma membrane"/>
    <property type="evidence" value="ECO:0007669"/>
    <property type="project" value="UniProtKB-SubCell"/>
</dbReference>
<dbReference type="GO" id="GO:0015439">
    <property type="term" value="F:ABC-type heme transporter activity"/>
    <property type="evidence" value="ECO:0007669"/>
    <property type="project" value="UniProtKB-EC"/>
</dbReference>
<dbReference type="GO" id="GO:0005524">
    <property type="term" value="F:ATP binding"/>
    <property type="evidence" value="ECO:0007669"/>
    <property type="project" value="UniProtKB-KW"/>
</dbReference>
<dbReference type="GO" id="GO:0016887">
    <property type="term" value="F:ATP hydrolysis activity"/>
    <property type="evidence" value="ECO:0007669"/>
    <property type="project" value="InterPro"/>
</dbReference>
<dbReference type="GO" id="GO:0017004">
    <property type="term" value="P:cytochrome complex assembly"/>
    <property type="evidence" value="ECO:0007669"/>
    <property type="project" value="UniProtKB-KW"/>
</dbReference>
<dbReference type="Gene3D" id="3.40.50.300">
    <property type="entry name" value="P-loop containing nucleotide triphosphate hydrolases"/>
    <property type="match status" value="1"/>
</dbReference>
<dbReference type="InterPro" id="IPR003593">
    <property type="entry name" value="AAA+_ATPase"/>
</dbReference>
<dbReference type="InterPro" id="IPR003439">
    <property type="entry name" value="ABC_transporter-like_ATP-bd"/>
</dbReference>
<dbReference type="InterPro" id="IPR017871">
    <property type="entry name" value="ABC_transporter-like_CS"/>
</dbReference>
<dbReference type="InterPro" id="IPR005895">
    <property type="entry name" value="ABC_transptr_haem_export_CcmA"/>
</dbReference>
<dbReference type="InterPro" id="IPR027417">
    <property type="entry name" value="P-loop_NTPase"/>
</dbReference>
<dbReference type="NCBIfam" id="TIGR01189">
    <property type="entry name" value="ccmA"/>
    <property type="match status" value="1"/>
</dbReference>
<dbReference type="PANTHER" id="PTHR43499">
    <property type="entry name" value="ABC TRANSPORTER I FAMILY MEMBER 1"/>
    <property type="match status" value="1"/>
</dbReference>
<dbReference type="PANTHER" id="PTHR43499:SF1">
    <property type="entry name" value="ABC TRANSPORTER I FAMILY MEMBER 1"/>
    <property type="match status" value="1"/>
</dbReference>
<dbReference type="Pfam" id="PF00005">
    <property type="entry name" value="ABC_tran"/>
    <property type="match status" value="1"/>
</dbReference>
<dbReference type="SMART" id="SM00382">
    <property type="entry name" value="AAA"/>
    <property type="match status" value="1"/>
</dbReference>
<dbReference type="SUPFAM" id="SSF52540">
    <property type="entry name" value="P-loop containing nucleoside triphosphate hydrolases"/>
    <property type="match status" value="1"/>
</dbReference>
<dbReference type="PROSITE" id="PS00211">
    <property type="entry name" value="ABC_TRANSPORTER_1"/>
    <property type="match status" value="1"/>
</dbReference>
<dbReference type="PROSITE" id="PS50893">
    <property type="entry name" value="ABC_TRANSPORTER_2"/>
    <property type="match status" value="1"/>
</dbReference>
<dbReference type="PROSITE" id="PS51243">
    <property type="entry name" value="CCMA"/>
    <property type="match status" value="1"/>
</dbReference>
<name>CCMA_PARDP</name>
<keyword id="KW-0067">ATP-binding</keyword>
<keyword id="KW-0997">Cell inner membrane</keyword>
<keyword id="KW-1003">Cell membrane</keyword>
<keyword id="KW-0201">Cytochrome c-type biogenesis</keyword>
<keyword id="KW-0472">Membrane</keyword>
<keyword id="KW-0547">Nucleotide-binding</keyword>
<keyword id="KW-1185">Reference proteome</keyword>
<keyword id="KW-1278">Translocase</keyword>
<keyword id="KW-0813">Transport</keyword>
<sequence>MNLLAVRDLAVARGGLRAVEGVCFNLNAGGALVLRGPNGIGKTTLLRTLAGLQPLVSGVIEAAPDAIAYAGHSDGLKPALTVTENLRFWAEIFGGRNIDAALEAMNLRDLANRPAHALSAGQKRRLGLARLMVTGRPVWLLDEPTVSLDRDSVALFAAMLRAHLGRGGAAVIATHIDLGLPEAEILELGPFRASELRRQSRPAGFNEAFG</sequence>
<feature type="chain" id="PRO_0000092192" description="Cytochrome c biogenesis ATP-binding export protein CcmA">
    <location>
        <begin position="1"/>
        <end position="210"/>
    </location>
</feature>
<feature type="domain" description="ABC transporter" evidence="1">
    <location>
        <begin position="4"/>
        <end position="207"/>
    </location>
</feature>
<feature type="binding site" evidence="1">
    <location>
        <begin position="36"/>
        <end position="43"/>
    </location>
    <ligand>
        <name>ATP</name>
        <dbReference type="ChEBI" id="CHEBI:30616"/>
    </ligand>
</feature>
<feature type="sequence conflict" description="In Ref. 1; CAA96502." evidence="3" ref="1">
    <original>L</original>
    <variation>V</variation>
    <location>
        <position position="34"/>
    </location>
</feature>
<feature type="sequence conflict" description="In Ref. 1; CAA96502." evidence="3" ref="1">
    <original>L</original>
    <variation>V</variation>
    <location>
        <position position="128"/>
    </location>
</feature>
<feature type="sequence conflict" description="In Ref. 1; CAA96502." evidence="3" ref="1">
    <original>V</original>
    <variation>GL</variation>
    <location>
        <position position="153"/>
    </location>
</feature>
<feature type="sequence conflict" description="In Ref. 1; CAA96502." evidence="3" ref="1">
    <original>ML</original>
    <variation>IV</variation>
    <location>
        <begin position="159"/>
        <end position="160"/>
    </location>
</feature>
<feature type="sequence conflict" description="In Ref. 1; CAA96502." evidence="3" ref="1">
    <original>RQSRP</original>
    <variation>PAIAA</variation>
    <location>
        <begin position="198"/>
        <end position="202"/>
    </location>
</feature>
<organism>
    <name type="scientific">Paracoccus denitrificans (strain Pd 1222)</name>
    <dbReference type="NCBI Taxonomy" id="318586"/>
    <lineage>
        <taxon>Bacteria</taxon>
        <taxon>Pseudomonadati</taxon>
        <taxon>Pseudomonadota</taxon>
        <taxon>Alphaproteobacteria</taxon>
        <taxon>Rhodobacterales</taxon>
        <taxon>Paracoccaceae</taxon>
        <taxon>Paracoccus</taxon>
    </lineage>
</organism>
<reference key="1">
    <citation type="journal article" date="1997" name="Microbiology">
        <title>The Paracoccus denitrificans ccmA, B and C genes: cloning and sequencing, and analysis of the potential of their products to form a haem or apo-c-type cytochrome transporter.</title>
        <authorList>
            <person name="Page D."/>
            <person name="Pearce D.A."/>
            <person name="Norris H.A."/>
            <person name="Ferguson S.J."/>
        </authorList>
    </citation>
    <scope>NUCLEOTIDE SEQUENCE [GENOMIC DNA]</scope>
</reference>
<reference key="2">
    <citation type="submission" date="2006-12" db="EMBL/GenBank/DDBJ databases">
        <title>Complete sequence of chromosome 1 of Paracoccus denitrificans PD1222.</title>
        <authorList>
            <person name="Copeland A."/>
            <person name="Lucas S."/>
            <person name="Lapidus A."/>
            <person name="Barry K."/>
            <person name="Detter J.C."/>
            <person name="Glavina del Rio T."/>
            <person name="Hammon N."/>
            <person name="Israni S."/>
            <person name="Dalin E."/>
            <person name="Tice H."/>
            <person name="Pitluck S."/>
            <person name="Munk A.C."/>
            <person name="Brettin T."/>
            <person name="Bruce D."/>
            <person name="Han C."/>
            <person name="Tapia R."/>
            <person name="Gilna P."/>
            <person name="Schmutz J."/>
            <person name="Larimer F."/>
            <person name="Land M."/>
            <person name="Hauser L."/>
            <person name="Kyrpides N."/>
            <person name="Lykidis A."/>
            <person name="Spiro S."/>
            <person name="Richardson D.J."/>
            <person name="Moir J.W.B."/>
            <person name="Ferguson S.J."/>
            <person name="van Spanning R.J.M."/>
            <person name="Richardson P."/>
        </authorList>
    </citation>
    <scope>NUCLEOTIDE SEQUENCE [LARGE SCALE GENOMIC DNA]</scope>
    <source>
        <strain>Pd 1222</strain>
    </source>
</reference>
<reference key="3">
    <citation type="journal article" date="1999" name="Microbiology">
        <title>Mutational analysis of the Paracoccus denitrificans c-type cytochrome biosynthetic genes ccmABCDG: disruption of ccmC has distinct effects suggesting a role for CcmC independent of CcmAB.</title>
        <authorList>
            <person name="Page M.D."/>
            <person name="Ferguson S.J."/>
        </authorList>
    </citation>
    <scope>SUBUNIT</scope>
</reference>
<proteinExistence type="evidence at protein level"/>